<keyword id="KW-0963">Cytoplasm</keyword>
<keyword id="KW-0396">Initiation factor</keyword>
<keyword id="KW-0479">Metal-binding</keyword>
<keyword id="KW-0648">Protein biosynthesis</keyword>
<keyword id="KW-1185">Reference proteome</keyword>
<keyword id="KW-0862">Zinc</keyword>
<keyword id="KW-0863">Zinc-finger</keyword>
<name>IF2B_CAEEL</name>
<feature type="chain" id="PRO_0000137410" description="Eukaryotic translation initiation factor 2 subunit 2">
    <location>
        <begin position="1"/>
        <end position="250"/>
    </location>
</feature>
<feature type="zinc finger region" description="C4-type" evidence="4">
    <location>
        <begin position="193"/>
        <end position="217"/>
    </location>
</feature>
<proteinExistence type="inferred from homology"/>
<dbReference type="EMBL" id="BX284601">
    <property type="protein sequence ID" value="CAB00049.1"/>
    <property type="molecule type" value="Genomic_DNA"/>
</dbReference>
<dbReference type="EMBL" id="Z75533">
    <property type="protein sequence ID" value="CAB00049.1"/>
    <property type="status" value="JOINED"/>
    <property type="molecule type" value="Genomic_DNA"/>
</dbReference>
<dbReference type="PIR" id="T20242">
    <property type="entry name" value="T20242"/>
</dbReference>
<dbReference type="RefSeq" id="NP_492209.1">
    <property type="nucleotide sequence ID" value="NM_059808.7"/>
</dbReference>
<dbReference type="SMR" id="Q21230"/>
<dbReference type="BioGRID" id="38019">
    <property type="interactions" value="17"/>
</dbReference>
<dbReference type="FunCoup" id="Q21230">
    <property type="interactions" value="3090"/>
</dbReference>
<dbReference type="STRING" id="6239.K04G2.1.2"/>
<dbReference type="PaxDb" id="6239-K04G2.1.1"/>
<dbReference type="PeptideAtlas" id="Q21230"/>
<dbReference type="EnsemblMetazoa" id="K04G2.1.1">
    <property type="protein sequence ID" value="K04G2.1.1"/>
    <property type="gene ID" value="WBGene00010560"/>
</dbReference>
<dbReference type="EnsemblMetazoa" id="K04G2.1.2">
    <property type="protein sequence ID" value="K04G2.1.2"/>
    <property type="gene ID" value="WBGene00010560"/>
</dbReference>
<dbReference type="GeneID" id="172584"/>
<dbReference type="KEGG" id="cel:CELE_K04G2.1"/>
<dbReference type="AGR" id="WB:WBGene00010560"/>
<dbReference type="CTD" id="172584"/>
<dbReference type="WormBase" id="K04G2.1">
    <property type="protein sequence ID" value="CE16227"/>
    <property type="gene ID" value="WBGene00010560"/>
    <property type="gene designation" value="eif-2beta"/>
</dbReference>
<dbReference type="eggNOG" id="KOG2768">
    <property type="taxonomic scope" value="Eukaryota"/>
</dbReference>
<dbReference type="GeneTree" id="ENSGT00940000167018"/>
<dbReference type="HOGENOM" id="CLU_026663_0_1_1"/>
<dbReference type="InParanoid" id="Q21230"/>
<dbReference type="OMA" id="WPDYTYE"/>
<dbReference type="OrthoDB" id="10255414at2759"/>
<dbReference type="PhylomeDB" id="Q21230"/>
<dbReference type="Reactome" id="R-CEL-156827">
    <property type="pathway name" value="L13a-mediated translational silencing of Ceruloplasmin expression"/>
</dbReference>
<dbReference type="Reactome" id="R-CEL-381042">
    <property type="pathway name" value="PERK regulates gene expression"/>
</dbReference>
<dbReference type="Reactome" id="R-CEL-382556">
    <property type="pathway name" value="ABC-family proteins mediated transport"/>
</dbReference>
<dbReference type="Reactome" id="R-CEL-72649">
    <property type="pathway name" value="Translation initiation complex formation"/>
</dbReference>
<dbReference type="Reactome" id="R-CEL-72695">
    <property type="pathway name" value="Formation of the ternary complex, and subsequently, the 43S complex"/>
</dbReference>
<dbReference type="Reactome" id="R-CEL-72702">
    <property type="pathway name" value="Ribosomal scanning and start codon recognition"/>
</dbReference>
<dbReference type="Reactome" id="R-CEL-72731">
    <property type="pathway name" value="Recycling of eIF2:GDP"/>
</dbReference>
<dbReference type="Reactome" id="R-CEL-9840373">
    <property type="pathway name" value="Cellular response to mitochondrial stress"/>
</dbReference>
<dbReference type="PRO" id="PR:Q21230"/>
<dbReference type="Proteomes" id="UP000001940">
    <property type="component" value="Chromosome I"/>
</dbReference>
<dbReference type="Bgee" id="WBGene00010560">
    <property type="expression patterns" value="Expressed in germ line (C elegans) and 4 other cell types or tissues"/>
</dbReference>
<dbReference type="GO" id="GO:0005829">
    <property type="term" value="C:cytosol"/>
    <property type="evidence" value="ECO:0007669"/>
    <property type="project" value="UniProtKB-SubCell"/>
</dbReference>
<dbReference type="GO" id="GO:0005850">
    <property type="term" value="C:eukaryotic translation initiation factor 2 complex"/>
    <property type="evidence" value="ECO:0000250"/>
    <property type="project" value="UniProtKB"/>
</dbReference>
<dbReference type="GO" id="GO:0003729">
    <property type="term" value="F:mRNA binding"/>
    <property type="evidence" value="ECO:0000318"/>
    <property type="project" value="GO_Central"/>
</dbReference>
<dbReference type="GO" id="GO:0003743">
    <property type="term" value="F:translation initiation factor activity"/>
    <property type="evidence" value="ECO:0000318"/>
    <property type="project" value="GO_Central"/>
</dbReference>
<dbReference type="GO" id="GO:0031369">
    <property type="term" value="F:translation initiation factor binding"/>
    <property type="evidence" value="ECO:0000318"/>
    <property type="project" value="GO_Central"/>
</dbReference>
<dbReference type="GO" id="GO:0008270">
    <property type="term" value="F:zinc ion binding"/>
    <property type="evidence" value="ECO:0007669"/>
    <property type="project" value="UniProtKB-KW"/>
</dbReference>
<dbReference type="GO" id="GO:0002183">
    <property type="term" value="P:cytoplasmic translational initiation"/>
    <property type="evidence" value="ECO:0000250"/>
    <property type="project" value="UniProtKB"/>
</dbReference>
<dbReference type="GO" id="GO:0008340">
    <property type="term" value="P:determination of adult lifespan"/>
    <property type="evidence" value="ECO:0000315"/>
    <property type="project" value="WormBase"/>
</dbReference>
<dbReference type="GO" id="GO:0001731">
    <property type="term" value="P:formation of translation preinitiation complex"/>
    <property type="evidence" value="ECO:0000318"/>
    <property type="project" value="GO_Central"/>
</dbReference>
<dbReference type="GO" id="GO:0040014">
    <property type="term" value="P:regulation of multicellular organism growth"/>
    <property type="evidence" value="ECO:0000315"/>
    <property type="project" value="WormBase"/>
</dbReference>
<dbReference type="GO" id="GO:0006412">
    <property type="term" value="P:translation"/>
    <property type="evidence" value="ECO:0000315"/>
    <property type="project" value="UniProtKB"/>
</dbReference>
<dbReference type="FunFam" id="3.30.30.170:FF:000001">
    <property type="entry name" value="Eukaryotic translation initiation factor 2 subunit"/>
    <property type="match status" value="1"/>
</dbReference>
<dbReference type="Gene3D" id="3.30.30.170">
    <property type="match status" value="1"/>
</dbReference>
<dbReference type="InterPro" id="IPR045196">
    <property type="entry name" value="IF2/IF5"/>
</dbReference>
<dbReference type="InterPro" id="IPR002735">
    <property type="entry name" value="Transl_init_fac_IF2/IF5_dom"/>
</dbReference>
<dbReference type="InterPro" id="IPR016189">
    <property type="entry name" value="Transl_init_fac_IF2/IF5_N"/>
</dbReference>
<dbReference type="InterPro" id="IPR016190">
    <property type="entry name" value="Transl_init_fac_IF2/IF5_Zn-bd"/>
</dbReference>
<dbReference type="PANTHER" id="PTHR23001">
    <property type="entry name" value="EUKARYOTIC TRANSLATION INITIATION FACTOR"/>
    <property type="match status" value="1"/>
</dbReference>
<dbReference type="PANTHER" id="PTHR23001:SF3">
    <property type="entry name" value="EUKARYOTIC TRANSLATION INITIATION FACTOR 2 SUBUNIT 2"/>
    <property type="match status" value="1"/>
</dbReference>
<dbReference type="Pfam" id="PF01873">
    <property type="entry name" value="eIF-5_eIF-2B"/>
    <property type="match status" value="1"/>
</dbReference>
<dbReference type="SMART" id="SM00653">
    <property type="entry name" value="eIF2B_5"/>
    <property type="match status" value="1"/>
</dbReference>
<dbReference type="SUPFAM" id="SSF100966">
    <property type="entry name" value="Translation initiation factor 2 beta, aIF2beta, N-terminal domain"/>
    <property type="match status" value="1"/>
</dbReference>
<dbReference type="SUPFAM" id="SSF75689">
    <property type="entry name" value="Zinc-binding domain of translation initiation factor 2 beta"/>
    <property type="match status" value="1"/>
</dbReference>
<sequence>MADDLGLDLGKKKKSKKVIKIDGDDAPVETGVEAVEDGLGELNLGAKKKKKTPKTAGEEVVEEKVPTLEIGIGAQNLIDAKGAWPDYTYEEALTLVYQVMKDKNPDFAGDKKKFAIKLPEVARAGSKKTAFSNFLEICRLMKRQDKHVLQFLLAELGTTGSIDGSNCLIVKGRWQQKQFESVLRKYIKEYVMCHTCKSPETQLTKDTRLFFLQCTNCGSRCSVTAIKSGFKAVVGKRAAIRRAEEATAGK</sequence>
<protein>
    <recommendedName>
        <fullName>Eukaryotic translation initiation factor 2 subunit 2</fullName>
    </recommendedName>
    <alternativeName>
        <fullName>Eukaryotic translation initiation factor 2 subunit beta</fullName>
        <shortName>eIF2-beta</shortName>
    </alternativeName>
</protein>
<comment type="function">
    <text evidence="1">Component of the eIF2 complex that functions in the early steps of protein synthesis by forming a ternary complex with GTP and initiator tRNA. This complex binds to a 40S ribosomal subunit, followed by mRNA binding to form a 43S pre-initiation complex (43S PIC). Junction of the 60S ribosomal subunit to form the 80S initiation complex is preceded by hydrolysis of the GTP bound to eIF2 and release of an eIF2-GDP binary complex. In order for eIF2 to recycle and catalyze another round of initiation, the GDP bound to eIF2 must exchange with GTP by way of a reaction catalyzed by eIF2B (By similarity).</text>
</comment>
<comment type="subunit">
    <text evidence="2">Eukaryotic translation initiation factor 2 eIF2 is a heterotrimeric complex composed of an alpha, a beta and a gamma subunit.</text>
</comment>
<comment type="subcellular location">
    <subcellularLocation>
        <location evidence="3">Cytoplasm</location>
        <location evidence="3">Cytosol</location>
    </subcellularLocation>
</comment>
<comment type="disruption phenotype">
    <text evidence="5">RNAi-mediated knockdown results in a reduced body length (PubMed:18635357). This phenotype in suppressed in a ced-4 n1162 mutant background (PubMed:18635357).</text>
</comment>
<comment type="similarity">
    <text evidence="6">Belongs to the eIF-2-beta/eIF-5 family.</text>
</comment>
<organism>
    <name type="scientific">Caenorhabditis elegans</name>
    <dbReference type="NCBI Taxonomy" id="6239"/>
    <lineage>
        <taxon>Eukaryota</taxon>
        <taxon>Metazoa</taxon>
        <taxon>Ecdysozoa</taxon>
        <taxon>Nematoda</taxon>
        <taxon>Chromadorea</taxon>
        <taxon>Rhabditida</taxon>
        <taxon>Rhabditina</taxon>
        <taxon>Rhabditomorpha</taxon>
        <taxon>Rhabditoidea</taxon>
        <taxon>Rhabditidae</taxon>
        <taxon>Peloderinae</taxon>
        <taxon>Caenorhabditis</taxon>
    </lineage>
</organism>
<gene>
    <name evidence="7" type="primary">eif-2beta</name>
    <name evidence="7" type="synonym">iftb-1</name>
    <name evidence="7" type="ORF">K04G2.1</name>
</gene>
<accession>Q21230</accession>
<accession>Q18855</accession>
<reference key="1">
    <citation type="journal article" date="1998" name="Science">
        <title>Genome sequence of the nematode C. elegans: a platform for investigating biology.</title>
        <authorList>
            <consortium name="The C. elegans sequencing consortium"/>
        </authorList>
    </citation>
    <scope>NUCLEOTIDE SEQUENCE [LARGE SCALE GENOMIC DNA]</scope>
    <source>
        <strain>Bristol N2</strain>
    </source>
</reference>
<reference key="2">
    <citation type="journal article" date="2008" name="Curr. Biol.">
        <title>ced-4 and proto-oncogene tfg-1 antagonistically regulate cell size and apoptosis in C. elegans.</title>
        <authorList>
            <person name="Chen L."/>
            <person name="McCloskey T."/>
            <person name="Joshi P.M."/>
            <person name="Rothman J.H."/>
        </authorList>
    </citation>
    <scope>DISRUPTION PHENOTYPE</scope>
</reference>
<evidence type="ECO:0000250" key="1"/>
<evidence type="ECO:0000250" key="2">
    <source>
        <dbReference type="UniProtKB" id="P09064"/>
    </source>
</evidence>
<evidence type="ECO:0000250" key="3">
    <source>
        <dbReference type="UniProtKB" id="P56329"/>
    </source>
</evidence>
<evidence type="ECO:0000255" key="4"/>
<evidence type="ECO:0000269" key="5">
    <source>
    </source>
</evidence>
<evidence type="ECO:0000305" key="6"/>
<evidence type="ECO:0000312" key="7">
    <source>
        <dbReference type="WormBase" id="K04G2.1"/>
    </source>
</evidence>